<name>FLUC_NEIMA</name>
<accession>Q9JUL1</accession>
<accession>A1IRQ8</accession>
<evidence type="ECO:0000255" key="1">
    <source>
        <dbReference type="HAMAP-Rule" id="MF_00454"/>
    </source>
</evidence>
<organism>
    <name type="scientific">Neisseria meningitidis serogroup A / serotype 4A (strain DSM 15465 / Z2491)</name>
    <dbReference type="NCBI Taxonomy" id="122587"/>
    <lineage>
        <taxon>Bacteria</taxon>
        <taxon>Pseudomonadati</taxon>
        <taxon>Pseudomonadota</taxon>
        <taxon>Betaproteobacteria</taxon>
        <taxon>Neisseriales</taxon>
        <taxon>Neisseriaceae</taxon>
        <taxon>Neisseria</taxon>
    </lineage>
</organism>
<reference key="1">
    <citation type="journal article" date="2000" name="Nature">
        <title>Complete DNA sequence of a serogroup A strain of Neisseria meningitidis Z2491.</title>
        <authorList>
            <person name="Parkhill J."/>
            <person name="Achtman M."/>
            <person name="James K.D."/>
            <person name="Bentley S.D."/>
            <person name="Churcher C.M."/>
            <person name="Klee S.R."/>
            <person name="Morelli G."/>
            <person name="Basham D."/>
            <person name="Brown D."/>
            <person name="Chillingworth T."/>
            <person name="Davies R.M."/>
            <person name="Davis P."/>
            <person name="Devlin K."/>
            <person name="Feltwell T."/>
            <person name="Hamlin N."/>
            <person name="Holroyd S."/>
            <person name="Jagels K."/>
            <person name="Leather S."/>
            <person name="Moule S."/>
            <person name="Mungall K.L."/>
            <person name="Quail M.A."/>
            <person name="Rajandream M.A."/>
            <person name="Rutherford K.M."/>
            <person name="Simmonds M."/>
            <person name="Skelton J."/>
            <person name="Whitehead S."/>
            <person name="Spratt B.G."/>
            <person name="Barrell B.G."/>
        </authorList>
    </citation>
    <scope>NUCLEOTIDE SEQUENCE [LARGE SCALE GENOMIC DNA]</scope>
    <source>
        <strain>DSM 15465 / Z2491</strain>
    </source>
</reference>
<proteinExistence type="inferred from homology"/>
<feature type="chain" id="PRO_0000110140" description="Fluoride-specific ion channel FluC">
    <location>
        <begin position="1"/>
        <end position="119"/>
    </location>
</feature>
<feature type="transmembrane region" description="Helical" evidence="1">
    <location>
        <begin position="5"/>
        <end position="25"/>
    </location>
</feature>
<feature type="transmembrane region" description="Helical" evidence="1">
    <location>
        <begin position="30"/>
        <end position="50"/>
    </location>
</feature>
<feature type="transmembrane region" description="Helical" evidence="1">
    <location>
        <begin position="59"/>
        <end position="79"/>
    </location>
</feature>
<feature type="transmembrane region" description="Helical" evidence="1">
    <location>
        <begin position="92"/>
        <end position="112"/>
    </location>
</feature>
<feature type="binding site" evidence="1">
    <location>
        <position position="69"/>
    </location>
    <ligand>
        <name>Na(+)</name>
        <dbReference type="ChEBI" id="CHEBI:29101"/>
        <note>structural</note>
    </ligand>
</feature>
<feature type="binding site" evidence="1">
    <location>
        <position position="72"/>
    </location>
    <ligand>
        <name>Na(+)</name>
        <dbReference type="ChEBI" id="CHEBI:29101"/>
        <note>structural</note>
    </ligand>
</feature>
<dbReference type="EMBL" id="AL157959">
    <property type="protein sequence ID" value="CAM08452.1"/>
    <property type="molecule type" value="Genomic_DNA"/>
</dbReference>
<dbReference type="PIR" id="F81894">
    <property type="entry name" value="F81894"/>
</dbReference>
<dbReference type="RefSeq" id="WP_002240501.1">
    <property type="nucleotide sequence ID" value="NC_003116.1"/>
</dbReference>
<dbReference type="SMR" id="Q9JUL1"/>
<dbReference type="EnsemblBacteria" id="CAM08452">
    <property type="protein sequence ID" value="CAM08452"/>
    <property type="gene ID" value="NMA1264"/>
</dbReference>
<dbReference type="KEGG" id="nma:NMA1264"/>
<dbReference type="HOGENOM" id="CLU_114342_3_0_4"/>
<dbReference type="Proteomes" id="UP000000626">
    <property type="component" value="Chromosome"/>
</dbReference>
<dbReference type="GO" id="GO:0005886">
    <property type="term" value="C:plasma membrane"/>
    <property type="evidence" value="ECO:0007669"/>
    <property type="project" value="UniProtKB-SubCell"/>
</dbReference>
<dbReference type="GO" id="GO:0062054">
    <property type="term" value="F:fluoride channel activity"/>
    <property type="evidence" value="ECO:0007669"/>
    <property type="project" value="UniProtKB-UniRule"/>
</dbReference>
<dbReference type="GO" id="GO:0046872">
    <property type="term" value="F:metal ion binding"/>
    <property type="evidence" value="ECO:0007669"/>
    <property type="project" value="UniProtKB-KW"/>
</dbReference>
<dbReference type="GO" id="GO:0140114">
    <property type="term" value="P:cellular detoxification of fluoride"/>
    <property type="evidence" value="ECO:0007669"/>
    <property type="project" value="UniProtKB-UniRule"/>
</dbReference>
<dbReference type="HAMAP" id="MF_00454">
    <property type="entry name" value="FluC"/>
    <property type="match status" value="1"/>
</dbReference>
<dbReference type="InterPro" id="IPR003691">
    <property type="entry name" value="FluC"/>
</dbReference>
<dbReference type="NCBIfam" id="NF010826">
    <property type="entry name" value="PRK14230.1"/>
    <property type="match status" value="1"/>
</dbReference>
<dbReference type="PANTHER" id="PTHR28259">
    <property type="entry name" value="FLUORIDE EXPORT PROTEIN 1-RELATED"/>
    <property type="match status" value="1"/>
</dbReference>
<dbReference type="PANTHER" id="PTHR28259:SF1">
    <property type="entry name" value="FLUORIDE EXPORT PROTEIN 1-RELATED"/>
    <property type="match status" value="1"/>
</dbReference>
<dbReference type="Pfam" id="PF02537">
    <property type="entry name" value="CRCB"/>
    <property type="match status" value="1"/>
</dbReference>
<comment type="function">
    <text evidence="1">Fluoride-specific ion channel. Important for reducing fluoride concentration in the cell, thus reducing its toxicity.</text>
</comment>
<comment type="catalytic activity">
    <reaction evidence="1">
        <text>fluoride(in) = fluoride(out)</text>
        <dbReference type="Rhea" id="RHEA:76159"/>
        <dbReference type="ChEBI" id="CHEBI:17051"/>
    </reaction>
    <physiologicalReaction direction="left-to-right" evidence="1">
        <dbReference type="Rhea" id="RHEA:76160"/>
    </physiologicalReaction>
</comment>
<comment type="activity regulation">
    <text evidence="1">Na(+) is not transported, but it plays an essential structural role and its presence is essential for fluoride channel function.</text>
</comment>
<comment type="subcellular location">
    <subcellularLocation>
        <location evidence="1">Cell inner membrane</location>
        <topology evidence="1">Multi-pass membrane protein</topology>
    </subcellularLocation>
</comment>
<comment type="similarity">
    <text evidence="1">Belongs to the fluoride channel Fluc/FEX (TC 1.A.43) family.</text>
</comment>
<protein>
    <recommendedName>
        <fullName evidence="1">Fluoride-specific ion channel FluC</fullName>
    </recommendedName>
</protein>
<sequence>MLSNIIPLSIGAALGATARWLLNLAVPASLSPATGNLFANWTGAFLIGIFAETVNHPQWKLLLITGFLGSLTTLSGFSLETVTLLQSNRPASALANIFLHTAGSLLLTWLGLKIGTAVK</sequence>
<keyword id="KW-0997">Cell inner membrane</keyword>
<keyword id="KW-1003">Cell membrane</keyword>
<keyword id="KW-0407">Ion channel</keyword>
<keyword id="KW-0406">Ion transport</keyword>
<keyword id="KW-0472">Membrane</keyword>
<keyword id="KW-0479">Metal-binding</keyword>
<keyword id="KW-0915">Sodium</keyword>
<keyword id="KW-0812">Transmembrane</keyword>
<keyword id="KW-1133">Transmembrane helix</keyword>
<keyword id="KW-0813">Transport</keyword>
<gene>
    <name evidence="1" type="primary">fluC</name>
    <name evidence="1" type="synonym">crcB</name>
    <name type="ordered locus">NMA1264</name>
</gene>